<protein>
    <recommendedName>
        <fullName>Uncharacterized protein B407L</fullName>
        <shortName>pB407L</shortName>
    </recommendedName>
</protein>
<organismHost>
    <name type="scientific">Ornithodoros</name>
    <name type="common">relapsing fever ticks</name>
    <dbReference type="NCBI Taxonomy" id="6937"/>
</organismHost>
<organismHost>
    <name type="scientific">Phacochoerus aethiopicus</name>
    <name type="common">Warthog</name>
    <dbReference type="NCBI Taxonomy" id="85517"/>
</organismHost>
<organismHost>
    <name type="scientific">Phacochoerus africanus</name>
    <name type="common">Warthog</name>
    <dbReference type="NCBI Taxonomy" id="41426"/>
</organismHost>
<organismHost>
    <name type="scientific">Potamochoerus larvatus</name>
    <name type="common">Bushpig</name>
    <dbReference type="NCBI Taxonomy" id="273792"/>
</organismHost>
<organismHost>
    <name type="scientific">Sus scrofa</name>
    <name type="common">Pig</name>
    <dbReference type="NCBI Taxonomy" id="9823"/>
</organismHost>
<feature type="chain" id="PRO_0000373679" description="Uncharacterized protein B407L">
    <location>
        <begin position="1"/>
        <end position="412"/>
    </location>
</feature>
<feature type="repeat" description="1">
    <location>
        <begin position="112"/>
        <end position="116"/>
    </location>
</feature>
<feature type="repeat" description="2">
    <location>
        <begin position="117"/>
        <end position="121"/>
    </location>
</feature>
<feature type="repeat" description="3">
    <location>
        <begin position="122"/>
        <end position="126"/>
    </location>
</feature>
<feature type="repeat" description="4">
    <location>
        <begin position="127"/>
        <end position="131"/>
    </location>
</feature>
<feature type="repeat" description="5">
    <location>
        <begin position="132"/>
        <end position="136"/>
    </location>
</feature>
<feature type="repeat" description="6">
    <location>
        <begin position="137"/>
        <end position="141"/>
    </location>
</feature>
<feature type="repeat" description="7">
    <location>
        <begin position="142"/>
        <end position="146"/>
    </location>
</feature>
<feature type="region of interest" description="7 X 5 AA tandem repeats of G-[NS]-[IV]-R-[DNS]">
    <location>
        <begin position="112"/>
        <end position="146"/>
    </location>
</feature>
<feature type="region of interest" description="Disordered" evidence="1">
    <location>
        <begin position="116"/>
        <end position="208"/>
    </location>
</feature>
<feature type="compositionally biased region" description="Low complexity" evidence="1">
    <location>
        <begin position="116"/>
        <end position="126"/>
    </location>
</feature>
<feature type="compositionally biased region" description="Basic and acidic residues" evidence="1">
    <location>
        <begin position="192"/>
        <end position="208"/>
    </location>
</feature>
<sequence>MEDTTFLEGANLAGITTLMNNLHINEQANLEELEKQVMGKQQSFPTDHFDEELNGLAKSLGINFNDPEFSLDSAHSVISKKPSGRGSDKVHGGIRRDSVCTDSICSDSVCSGSIRSGSIRSGSIRDGSIRDGSIRSGNIRDGSVRSSKTRRGPARNSSSRNDRGYSLSTHRKKYAESEASQKTAISKRDRKNHYAESEYSEKSIKPSTKQVDRLINHLRSNGDPNSFYKKEHDYERKTKLVKLEKINMLLTYLGNEQISTDDIKIPTIDSSMQEIDDVIEMLTLRNVGIRYSSIAEEILIGLARGLEIVFDGTREIPFLNYRPDYTGLHNTFMIKLFKMRYETSQVVGNLVQNMSPLSKICLELGPSLLLYPALIRTKHKASEDLYNLLQKGPEDPFTAYNEIHETLKKNNK</sequence>
<proteinExistence type="inferred from homology"/>
<organism>
    <name type="scientific">African swine fever virus (isolate Tick/South Africa/Pretoriuskop Pr4/1996)</name>
    <name type="common">ASFV</name>
    <dbReference type="NCBI Taxonomy" id="561443"/>
    <lineage>
        <taxon>Viruses</taxon>
        <taxon>Varidnaviria</taxon>
        <taxon>Bamfordvirae</taxon>
        <taxon>Nucleocytoviricota</taxon>
        <taxon>Pokkesviricetes</taxon>
        <taxon>Asfuvirales</taxon>
        <taxon>Asfarviridae</taxon>
        <taxon>Asfivirus</taxon>
        <taxon>African swine fever virus</taxon>
    </lineage>
</organism>
<name>VF407_ASFP4</name>
<keyword id="KW-0426">Late protein</keyword>
<keyword id="KW-0677">Repeat</keyword>
<accession>P0CAG4</accession>
<dbReference type="EMBL" id="AY261363">
    <property type="status" value="NOT_ANNOTATED_CDS"/>
    <property type="molecule type" value="Genomic_DNA"/>
</dbReference>
<dbReference type="SMR" id="P0CAG4"/>
<dbReference type="Proteomes" id="UP000000859">
    <property type="component" value="Segment"/>
</dbReference>
<comment type="induction">
    <text evidence="2">Expressed in the late phase of the viral replicative cycle.</text>
</comment>
<comment type="similarity">
    <text evidence="2">Belongs to the asfivirus B407L family.</text>
</comment>
<gene>
    <name type="ordered locus">Pret-096</name>
</gene>
<evidence type="ECO:0000256" key="1">
    <source>
        <dbReference type="SAM" id="MobiDB-lite"/>
    </source>
</evidence>
<evidence type="ECO:0000305" key="2"/>
<reference key="1">
    <citation type="submission" date="2003-03" db="EMBL/GenBank/DDBJ databases">
        <title>African swine fever virus genomes.</title>
        <authorList>
            <person name="Kutish G.F."/>
            <person name="Rock D.L."/>
        </authorList>
    </citation>
    <scope>NUCLEOTIDE SEQUENCE [GENOMIC DNA]</scope>
</reference>